<name>MNME_HYDCU</name>
<keyword id="KW-0963">Cytoplasm</keyword>
<keyword id="KW-0342">GTP-binding</keyword>
<keyword id="KW-0378">Hydrolase</keyword>
<keyword id="KW-0460">Magnesium</keyword>
<keyword id="KW-0479">Metal-binding</keyword>
<keyword id="KW-0547">Nucleotide-binding</keyword>
<keyword id="KW-0630">Potassium</keyword>
<keyword id="KW-0819">tRNA processing</keyword>
<protein>
    <recommendedName>
        <fullName evidence="1">tRNA modification GTPase MnmE</fullName>
        <ecNumber evidence="1">3.6.-.-</ecNumber>
    </recommendedName>
</protein>
<comment type="function">
    <text evidence="1">Exhibits a very high intrinsic GTPase hydrolysis rate. Involved in the addition of a carboxymethylaminomethyl (cmnm) group at the wobble position (U34) of certain tRNAs, forming tRNA-cmnm(5)s(2)U34.</text>
</comment>
<comment type="cofactor">
    <cofactor evidence="1">
        <name>K(+)</name>
        <dbReference type="ChEBI" id="CHEBI:29103"/>
    </cofactor>
    <text evidence="1">Binds 1 potassium ion per subunit.</text>
</comment>
<comment type="subunit">
    <text evidence="1">Homodimer. Heterotetramer of two MnmE and two MnmG subunits.</text>
</comment>
<comment type="subcellular location">
    <subcellularLocation>
        <location evidence="1">Cytoplasm</location>
    </subcellularLocation>
</comment>
<comment type="similarity">
    <text evidence="1">Belongs to the TRAFAC class TrmE-Era-EngA-EngB-Septin-like GTPase superfamily. TrmE GTPase family.</text>
</comment>
<comment type="sequence caution" evidence="2">
    <conflict type="erroneous initiation">
        <sequence resource="EMBL-CDS" id="ABB42783"/>
    </conflict>
</comment>
<organism>
    <name type="scientific">Hydrogenovibrio crunogenus (strain DSM 25203 / XCL-2)</name>
    <name type="common">Thiomicrospira crunogena</name>
    <dbReference type="NCBI Taxonomy" id="317025"/>
    <lineage>
        <taxon>Bacteria</taxon>
        <taxon>Pseudomonadati</taxon>
        <taxon>Pseudomonadota</taxon>
        <taxon>Gammaproteobacteria</taxon>
        <taxon>Thiotrichales</taxon>
        <taxon>Piscirickettsiaceae</taxon>
        <taxon>Hydrogenovibrio</taxon>
    </lineage>
</organism>
<dbReference type="EC" id="3.6.-.-" evidence="1"/>
<dbReference type="EMBL" id="CP000109">
    <property type="protein sequence ID" value="ABB42783.1"/>
    <property type="status" value="ALT_INIT"/>
    <property type="molecule type" value="Genomic_DNA"/>
</dbReference>
<dbReference type="SMR" id="Q31DJ0"/>
<dbReference type="STRING" id="317025.Tcr_2195"/>
<dbReference type="KEGG" id="tcx:Tcr_2195"/>
<dbReference type="eggNOG" id="COG0486">
    <property type="taxonomic scope" value="Bacteria"/>
</dbReference>
<dbReference type="HOGENOM" id="CLU_019624_4_1_6"/>
<dbReference type="OrthoDB" id="9805918at2"/>
<dbReference type="GO" id="GO:0005829">
    <property type="term" value="C:cytosol"/>
    <property type="evidence" value="ECO:0007669"/>
    <property type="project" value="TreeGrafter"/>
</dbReference>
<dbReference type="GO" id="GO:0005525">
    <property type="term" value="F:GTP binding"/>
    <property type="evidence" value="ECO:0007669"/>
    <property type="project" value="UniProtKB-UniRule"/>
</dbReference>
<dbReference type="GO" id="GO:0003924">
    <property type="term" value="F:GTPase activity"/>
    <property type="evidence" value="ECO:0007669"/>
    <property type="project" value="UniProtKB-UniRule"/>
</dbReference>
<dbReference type="GO" id="GO:0046872">
    <property type="term" value="F:metal ion binding"/>
    <property type="evidence" value="ECO:0007669"/>
    <property type="project" value="UniProtKB-KW"/>
</dbReference>
<dbReference type="GO" id="GO:0030488">
    <property type="term" value="P:tRNA methylation"/>
    <property type="evidence" value="ECO:0007669"/>
    <property type="project" value="TreeGrafter"/>
</dbReference>
<dbReference type="GO" id="GO:0002098">
    <property type="term" value="P:tRNA wobble uridine modification"/>
    <property type="evidence" value="ECO:0007669"/>
    <property type="project" value="TreeGrafter"/>
</dbReference>
<dbReference type="CDD" id="cd04164">
    <property type="entry name" value="trmE"/>
    <property type="match status" value="1"/>
</dbReference>
<dbReference type="CDD" id="cd14858">
    <property type="entry name" value="TrmE_N"/>
    <property type="match status" value="1"/>
</dbReference>
<dbReference type="FunFam" id="3.30.1360.120:FF:000001">
    <property type="entry name" value="tRNA modification GTPase MnmE"/>
    <property type="match status" value="1"/>
</dbReference>
<dbReference type="FunFam" id="3.40.50.300:FF:001376">
    <property type="entry name" value="tRNA modification GTPase MnmE"/>
    <property type="match status" value="1"/>
</dbReference>
<dbReference type="Gene3D" id="3.40.50.300">
    <property type="entry name" value="P-loop containing nucleotide triphosphate hydrolases"/>
    <property type="match status" value="1"/>
</dbReference>
<dbReference type="Gene3D" id="3.30.1360.120">
    <property type="entry name" value="Probable tRNA modification gtpase trme, domain 1"/>
    <property type="match status" value="1"/>
</dbReference>
<dbReference type="Gene3D" id="1.20.120.430">
    <property type="entry name" value="tRNA modification GTPase MnmE domain 2"/>
    <property type="match status" value="1"/>
</dbReference>
<dbReference type="HAMAP" id="MF_00379">
    <property type="entry name" value="GTPase_MnmE"/>
    <property type="match status" value="1"/>
</dbReference>
<dbReference type="InterPro" id="IPR031168">
    <property type="entry name" value="G_TrmE"/>
</dbReference>
<dbReference type="InterPro" id="IPR006073">
    <property type="entry name" value="GTP-bd"/>
</dbReference>
<dbReference type="InterPro" id="IPR018948">
    <property type="entry name" value="GTP-bd_TrmE_N"/>
</dbReference>
<dbReference type="InterPro" id="IPR004520">
    <property type="entry name" value="GTPase_MnmE"/>
</dbReference>
<dbReference type="InterPro" id="IPR027368">
    <property type="entry name" value="MnmE_dom2"/>
</dbReference>
<dbReference type="InterPro" id="IPR025867">
    <property type="entry name" value="MnmE_helical"/>
</dbReference>
<dbReference type="InterPro" id="IPR027417">
    <property type="entry name" value="P-loop_NTPase"/>
</dbReference>
<dbReference type="InterPro" id="IPR005225">
    <property type="entry name" value="Small_GTP-bd"/>
</dbReference>
<dbReference type="InterPro" id="IPR027266">
    <property type="entry name" value="TrmE/GcvT_dom1"/>
</dbReference>
<dbReference type="NCBIfam" id="TIGR00450">
    <property type="entry name" value="mnmE_trmE_thdF"/>
    <property type="match status" value="1"/>
</dbReference>
<dbReference type="NCBIfam" id="NF003661">
    <property type="entry name" value="PRK05291.1-3"/>
    <property type="match status" value="1"/>
</dbReference>
<dbReference type="NCBIfam" id="TIGR00231">
    <property type="entry name" value="small_GTP"/>
    <property type="match status" value="1"/>
</dbReference>
<dbReference type="PANTHER" id="PTHR42714">
    <property type="entry name" value="TRNA MODIFICATION GTPASE GTPBP3"/>
    <property type="match status" value="1"/>
</dbReference>
<dbReference type="PANTHER" id="PTHR42714:SF2">
    <property type="entry name" value="TRNA MODIFICATION GTPASE GTPBP3, MITOCHONDRIAL"/>
    <property type="match status" value="1"/>
</dbReference>
<dbReference type="Pfam" id="PF01926">
    <property type="entry name" value="MMR_HSR1"/>
    <property type="match status" value="1"/>
</dbReference>
<dbReference type="Pfam" id="PF12631">
    <property type="entry name" value="MnmE_helical"/>
    <property type="match status" value="1"/>
</dbReference>
<dbReference type="Pfam" id="PF10396">
    <property type="entry name" value="TrmE_N"/>
    <property type="match status" value="1"/>
</dbReference>
<dbReference type="PRINTS" id="PR00449">
    <property type="entry name" value="RASTRNSFRMNG"/>
</dbReference>
<dbReference type="SUPFAM" id="SSF52540">
    <property type="entry name" value="P-loop containing nucleoside triphosphate hydrolases"/>
    <property type="match status" value="1"/>
</dbReference>
<dbReference type="SUPFAM" id="SSF116878">
    <property type="entry name" value="TrmE connector domain"/>
    <property type="match status" value="1"/>
</dbReference>
<dbReference type="PROSITE" id="PS51709">
    <property type="entry name" value="G_TRME"/>
    <property type="match status" value="1"/>
</dbReference>
<reference key="1">
    <citation type="journal article" date="2006" name="PLoS Biol.">
        <title>The genome of deep-sea vent chemolithoautotroph Thiomicrospira crunogena XCL-2.</title>
        <authorList>
            <person name="Scott K.M."/>
            <person name="Sievert S.M."/>
            <person name="Abril F.N."/>
            <person name="Ball L.A."/>
            <person name="Barrett C.J."/>
            <person name="Blake R.A."/>
            <person name="Boller A.J."/>
            <person name="Chain P.S.G."/>
            <person name="Clark J.A."/>
            <person name="Davis C.R."/>
            <person name="Detter C."/>
            <person name="Do K.F."/>
            <person name="Dobrinski K.P."/>
            <person name="Faza B.I."/>
            <person name="Fitzpatrick K.A."/>
            <person name="Freyermuth S.K."/>
            <person name="Harmer T.L."/>
            <person name="Hauser L.J."/>
            <person name="Huegler M."/>
            <person name="Kerfeld C.A."/>
            <person name="Klotz M.G."/>
            <person name="Kong W.W."/>
            <person name="Land M."/>
            <person name="Lapidus A."/>
            <person name="Larimer F.W."/>
            <person name="Longo D.L."/>
            <person name="Lucas S."/>
            <person name="Malfatti S.A."/>
            <person name="Massey S.E."/>
            <person name="Martin D.D."/>
            <person name="McCuddin Z."/>
            <person name="Meyer F."/>
            <person name="Moore J.L."/>
            <person name="Ocampo L.H. Jr."/>
            <person name="Paul J.H."/>
            <person name="Paulsen I.T."/>
            <person name="Reep D.K."/>
            <person name="Ren Q."/>
            <person name="Ross R.L."/>
            <person name="Sato P.Y."/>
            <person name="Thomas P."/>
            <person name="Tinkham L.E."/>
            <person name="Zeruth G.T."/>
        </authorList>
    </citation>
    <scope>NUCLEOTIDE SEQUENCE [LARGE SCALE GENOMIC DNA]</scope>
    <source>
        <strain>DSM 25203 / XCL-2</strain>
    </source>
</reference>
<accession>Q31DJ0</accession>
<gene>
    <name evidence="1" type="primary">mnmE</name>
    <name evidence="1" type="synonym">trmE</name>
    <name type="ordered locus">Tcr_2195</name>
</gene>
<proteinExistence type="inferred from homology"/>
<feature type="chain" id="PRO_0000345932" description="tRNA modification GTPase MnmE">
    <location>
        <begin position="1"/>
        <end position="451"/>
    </location>
</feature>
<feature type="domain" description="TrmE-type G">
    <location>
        <begin position="217"/>
        <end position="374"/>
    </location>
</feature>
<feature type="binding site" evidence="1">
    <location>
        <position position="25"/>
    </location>
    <ligand>
        <name>(6S)-5-formyl-5,6,7,8-tetrahydrofolate</name>
        <dbReference type="ChEBI" id="CHEBI:57457"/>
    </ligand>
</feature>
<feature type="binding site" evidence="1">
    <location>
        <position position="82"/>
    </location>
    <ligand>
        <name>(6S)-5-formyl-5,6,7,8-tetrahydrofolate</name>
        <dbReference type="ChEBI" id="CHEBI:57457"/>
    </ligand>
</feature>
<feature type="binding site" evidence="1">
    <location>
        <position position="121"/>
    </location>
    <ligand>
        <name>(6S)-5-formyl-5,6,7,8-tetrahydrofolate</name>
        <dbReference type="ChEBI" id="CHEBI:57457"/>
    </ligand>
</feature>
<feature type="binding site" evidence="1">
    <location>
        <begin position="227"/>
        <end position="232"/>
    </location>
    <ligand>
        <name>GTP</name>
        <dbReference type="ChEBI" id="CHEBI:37565"/>
    </ligand>
</feature>
<feature type="binding site" evidence="1">
    <location>
        <position position="227"/>
    </location>
    <ligand>
        <name>K(+)</name>
        <dbReference type="ChEBI" id="CHEBI:29103"/>
    </ligand>
</feature>
<feature type="binding site" evidence="1">
    <location>
        <position position="231"/>
    </location>
    <ligand>
        <name>Mg(2+)</name>
        <dbReference type="ChEBI" id="CHEBI:18420"/>
    </ligand>
</feature>
<feature type="binding site" evidence="1">
    <location>
        <begin position="246"/>
        <end position="252"/>
    </location>
    <ligand>
        <name>GTP</name>
        <dbReference type="ChEBI" id="CHEBI:37565"/>
    </ligand>
</feature>
<feature type="binding site" evidence="1">
    <location>
        <position position="246"/>
    </location>
    <ligand>
        <name>K(+)</name>
        <dbReference type="ChEBI" id="CHEBI:29103"/>
    </ligand>
</feature>
<feature type="binding site" evidence="1">
    <location>
        <position position="248"/>
    </location>
    <ligand>
        <name>K(+)</name>
        <dbReference type="ChEBI" id="CHEBI:29103"/>
    </ligand>
</feature>
<feature type="binding site" evidence="1">
    <location>
        <position position="251"/>
    </location>
    <ligand>
        <name>K(+)</name>
        <dbReference type="ChEBI" id="CHEBI:29103"/>
    </ligand>
</feature>
<feature type="binding site" evidence="1">
    <location>
        <position position="252"/>
    </location>
    <ligand>
        <name>Mg(2+)</name>
        <dbReference type="ChEBI" id="CHEBI:18420"/>
    </ligand>
</feature>
<feature type="binding site" evidence="1">
    <location>
        <begin position="271"/>
        <end position="274"/>
    </location>
    <ligand>
        <name>GTP</name>
        <dbReference type="ChEBI" id="CHEBI:37565"/>
    </ligand>
</feature>
<feature type="binding site" evidence="1">
    <location>
        <position position="451"/>
    </location>
    <ligand>
        <name>(6S)-5-formyl-5,6,7,8-tetrahydrofolate</name>
        <dbReference type="ChEBI" id="CHEBI:57457"/>
    </ligand>
</feature>
<sequence length="451" mass="49211">MDFSTNDTIAAIATAPGRGGVGIVRVSGIKAAEIAEHVLGKCPKPRYAHYGPFLGAEGQVLDQGIALFFPNPHSFTGENVLELQGHGGPVILQWLLERVVQLGARLAEPGEFSKQAFLNDKLDLAQAEAIADLIDASSQQAARSALRSLQGDFSNQVNELVEQLIQLRIYVEAAIDFPEEEIDFLSDGKVAGQLQHILEQLHRVLASAQQGVLLREGMSVVILGRPNAGKSSLLNALSGRESAIVTDIAGTTRDIVKEEIQIDGMPLHVLDTAGLREATDAVEQIGIQRAWAAIEEADRILVMVQANEAIHPEDQAILEKMPSHIPVTLIHNKIDLIEKSPELSENDGETEIWLSAKHHLGLDLLKQHLKTEMGYAQTEEGVFMARKRHLEALETALHFVETGQQQLEHFAAGELLAEDLRQAQQALSEITGQFTSDDLLGRIFTSFCIGK</sequence>
<evidence type="ECO:0000255" key="1">
    <source>
        <dbReference type="HAMAP-Rule" id="MF_00379"/>
    </source>
</evidence>
<evidence type="ECO:0000305" key="2"/>